<proteinExistence type="evidence at protein level"/>
<organism>
    <name type="scientific">Homo sapiens</name>
    <name type="common">Human</name>
    <dbReference type="NCBI Taxonomy" id="9606"/>
    <lineage>
        <taxon>Eukaryota</taxon>
        <taxon>Metazoa</taxon>
        <taxon>Chordata</taxon>
        <taxon>Craniata</taxon>
        <taxon>Vertebrata</taxon>
        <taxon>Euteleostomi</taxon>
        <taxon>Mammalia</taxon>
        <taxon>Eutheria</taxon>
        <taxon>Euarchontoglires</taxon>
        <taxon>Primates</taxon>
        <taxon>Haplorrhini</taxon>
        <taxon>Catarrhini</taxon>
        <taxon>Hominidae</taxon>
        <taxon>Homo</taxon>
    </lineage>
</organism>
<keyword id="KW-0002">3D-structure</keyword>
<keyword id="KW-0025">Alternative splicing</keyword>
<keyword id="KW-0342">GTP-binding</keyword>
<keyword id="KW-0449">Lipoprotein</keyword>
<keyword id="KW-0519">Myristate</keyword>
<keyword id="KW-0547">Nucleotide-binding</keyword>
<keyword id="KW-1267">Proteomics identification</keyword>
<keyword id="KW-1185">Reference proteome</keyword>
<protein>
    <recommendedName>
        <fullName>ADP-ribosylation factor-like protein 5A</fullName>
    </recommendedName>
</protein>
<sequence>MGILFTRIWRLFNHQEHKVIIVGLDNAGKTTILYQFSMNEVVHTSPTIGSNVEEIVINNTRFLMWDIGGQESLRSSWNTYYTNTEFVIVVVDSTDRERISVTREELYKMLAHEDLRKAGLLIFANKQDVKECMTVAEISQFLKLTSIKDHQWHIQACCALTGEGLCQGLEWMMSRLKIR</sequence>
<evidence type="ECO:0000250" key="1"/>
<evidence type="ECO:0000255" key="2"/>
<evidence type="ECO:0000303" key="3">
    <source ref="6"/>
</evidence>
<evidence type="ECO:0000305" key="4"/>
<evidence type="ECO:0007829" key="5">
    <source>
        <dbReference type="PDB" id="1ZJ6"/>
    </source>
</evidence>
<evidence type="ECO:0007829" key="6">
    <source>
        <dbReference type="PDB" id="2H17"/>
    </source>
</evidence>
<dbReference type="EMBL" id="AF087889">
    <property type="protein sequence ID" value="AAP97188.1"/>
    <property type="molecule type" value="mRNA"/>
</dbReference>
<dbReference type="EMBL" id="AF100740">
    <property type="protein sequence ID" value="AAD40383.1"/>
    <property type="molecule type" value="mRNA"/>
</dbReference>
<dbReference type="EMBL" id="AK292714">
    <property type="protein sequence ID" value="BAF85403.1"/>
    <property type="molecule type" value="mRNA"/>
</dbReference>
<dbReference type="EMBL" id="AF493891">
    <property type="protein sequence ID" value="AAM12605.1"/>
    <property type="molecule type" value="mRNA"/>
</dbReference>
<dbReference type="EMBL" id="BT009829">
    <property type="protein sequence ID" value="AAP88831.1"/>
    <property type="molecule type" value="mRNA"/>
</dbReference>
<dbReference type="EMBL" id="CR613929">
    <property type="status" value="NOT_ANNOTATED_CDS"/>
    <property type="molecule type" value="mRNA"/>
</dbReference>
<dbReference type="EMBL" id="AC097448">
    <property type="protein sequence ID" value="AAX82013.1"/>
    <property type="molecule type" value="Genomic_DNA"/>
</dbReference>
<dbReference type="EMBL" id="CH471058">
    <property type="protein sequence ID" value="EAX11495.1"/>
    <property type="molecule type" value="Genomic_DNA"/>
</dbReference>
<dbReference type="EMBL" id="CH471058">
    <property type="protein sequence ID" value="EAX11496.1"/>
    <property type="molecule type" value="Genomic_DNA"/>
</dbReference>
<dbReference type="EMBL" id="BC001254">
    <property type="protein sequence ID" value="AAH01254.1"/>
    <property type="molecule type" value="mRNA"/>
</dbReference>
<dbReference type="CCDS" id="CCDS2195.1">
    <molecule id="Q9Y689-1"/>
</dbReference>
<dbReference type="CCDS" id="CCDS46425.1">
    <molecule id="Q9Y689-2"/>
</dbReference>
<dbReference type="RefSeq" id="NP_001032251.1">
    <molecule id="Q9Y689-2"/>
    <property type="nucleotide sequence ID" value="NM_001037174.2"/>
</dbReference>
<dbReference type="RefSeq" id="NP_036229.1">
    <molecule id="Q9Y689-1"/>
    <property type="nucleotide sequence ID" value="NM_012097.4"/>
</dbReference>
<dbReference type="RefSeq" id="NP_817114.2">
    <molecule id="Q9Y689-2"/>
    <property type="nucleotide sequence ID" value="NM_177985.3"/>
</dbReference>
<dbReference type="PDB" id="1Z6Y">
    <property type="method" value="X-ray"/>
    <property type="resolution" value="2.40 A"/>
    <property type="chains" value="A/B=1-179"/>
</dbReference>
<dbReference type="PDB" id="1ZJ6">
    <property type="method" value="X-ray"/>
    <property type="resolution" value="2.00 A"/>
    <property type="chains" value="A=1-179"/>
</dbReference>
<dbReference type="PDB" id="2H16">
    <property type="method" value="X-ray"/>
    <property type="resolution" value="2.00 A"/>
    <property type="chains" value="A/B/C/D=14-177"/>
</dbReference>
<dbReference type="PDB" id="2H17">
    <property type="method" value="X-ray"/>
    <property type="resolution" value="1.70 A"/>
    <property type="chains" value="A=15-176"/>
</dbReference>
<dbReference type="PDBsum" id="1Z6Y"/>
<dbReference type="PDBsum" id="1ZJ6"/>
<dbReference type="PDBsum" id="2H16"/>
<dbReference type="PDBsum" id="2H17"/>
<dbReference type="SMR" id="Q9Y689"/>
<dbReference type="BioGRID" id="117616">
    <property type="interactions" value="125"/>
</dbReference>
<dbReference type="FunCoup" id="Q9Y689">
    <property type="interactions" value="2409"/>
</dbReference>
<dbReference type="IntAct" id="Q9Y689">
    <property type="interactions" value="3"/>
</dbReference>
<dbReference type="STRING" id="9606.ENSP00000295087"/>
<dbReference type="DrugBank" id="DB04315">
    <property type="generic name" value="Guanosine-5'-Diphosphate"/>
</dbReference>
<dbReference type="iPTMnet" id="Q9Y689"/>
<dbReference type="PhosphoSitePlus" id="Q9Y689"/>
<dbReference type="SwissPalm" id="Q9Y689"/>
<dbReference type="BioMuta" id="ARL5A"/>
<dbReference type="DMDM" id="12229600"/>
<dbReference type="jPOST" id="Q9Y689"/>
<dbReference type="MassIVE" id="Q9Y689"/>
<dbReference type="PaxDb" id="9606-ENSP00000295087"/>
<dbReference type="PeptideAtlas" id="Q9Y689"/>
<dbReference type="ProteomicsDB" id="86622">
    <molecule id="Q9Y689-1"/>
</dbReference>
<dbReference type="ProteomicsDB" id="86623">
    <molecule id="Q9Y689-2"/>
</dbReference>
<dbReference type="Pumba" id="Q9Y689"/>
<dbReference type="Antibodypedia" id="33675">
    <property type="antibodies" value="68 antibodies from 16 providers"/>
</dbReference>
<dbReference type="DNASU" id="26225"/>
<dbReference type="Ensembl" id="ENST00000295087.13">
    <molecule id="Q9Y689-1"/>
    <property type="protein sequence ID" value="ENSP00000295087.8"/>
    <property type="gene ID" value="ENSG00000162980.17"/>
</dbReference>
<dbReference type="Ensembl" id="ENST00000428992.2">
    <molecule id="Q9Y689-2"/>
    <property type="protein sequence ID" value="ENSP00000415950.1"/>
    <property type="gene ID" value="ENSG00000162980.17"/>
</dbReference>
<dbReference type="Ensembl" id="ENST00000446896.7">
    <molecule id="Q9Y689-2"/>
    <property type="protein sequence ID" value="ENSP00000394626.3"/>
    <property type="gene ID" value="ENSG00000162980.17"/>
</dbReference>
<dbReference type="GeneID" id="26225"/>
<dbReference type="KEGG" id="hsa:26225"/>
<dbReference type="MANE-Select" id="ENST00000295087.13">
    <property type="protein sequence ID" value="ENSP00000295087.8"/>
    <property type="RefSeq nucleotide sequence ID" value="NM_012097.4"/>
    <property type="RefSeq protein sequence ID" value="NP_036229.1"/>
</dbReference>
<dbReference type="UCSC" id="uc002txw.2">
    <molecule id="Q9Y689-1"/>
    <property type="organism name" value="human"/>
</dbReference>
<dbReference type="AGR" id="HGNC:696"/>
<dbReference type="CTD" id="26225"/>
<dbReference type="DisGeNET" id="26225"/>
<dbReference type="GeneCards" id="ARL5A"/>
<dbReference type="HGNC" id="HGNC:696">
    <property type="gene designation" value="ARL5A"/>
</dbReference>
<dbReference type="HPA" id="ENSG00000162980">
    <property type="expression patterns" value="Low tissue specificity"/>
</dbReference>
<dbReference type="MIM" id="608960">
    <property type="type" value="gene"/>
</dbReference>
<dbReference type="neXtProt" id="NX_Q9Y689"/>
<dbReference type="OpenTargets" id="ENSG00000162980"/>
<dbReference type="PharmGKB" id="PA24989"/>
<dbReference type="VEuPathDB" id="HostDB:ENSG00000162980"/>
<dbReference type="eggNOG" id="KOG0070">
    <property type="taxonomic scope" value="Eukaryota"/>
</dbReference>
<dbReference type="GeneTree" id="ENSGT00940000154714"/>
<dbReference type="HOGENOM" id="CLU_040729_14_2_1"/>
<dbReference type="InParanoid" id="Q9Y689"/>
<dbReference type="OMA" id="ILFARIW"/>
<dbReference type="OrthoDB" id="2011769at2759"/>
<dbReference type="PAN-GO" id="Q9Y689">
    <property type="GO annotations" value="6 GO annotations based on evolutionary models"/>
</dbReference>
<dbReference type="PhylomeDB" id="Q9Y689"/>
<dbReference type="TreeFam" id="TF105465"/>
<dbReference type="PathwayCommons" id="Q9Y689"/>
<dbReference type="SignaLink" id="Q9Y689"/>
<dbReference type="BioGRID-ORCS" id="26225">
    <property type="hits" value="20 hits in 1088 CRISPR screens"/>
</dbReference>
<dbReference type="ChiTaRS" id="ARL5A">
    <property type="organism name" value="human"/>
</dbReference>
<dbReference type="EvolutionaryTrace" id="Q9Y689"/>
<dbReference type="GenomeRNAi" id="26225"/>
<dbReference type="Pharos" id="Q9Y689">
    <property type="development level" value="Tbio"/>
</dbReference>
<dbReference type="PRO" id="PR:Q9Y689"/>
<dbReference type="Proteomes" id="UP000005640">
    <property type="component" value="Chromosome 2"/>
</dbReference>
<dbReference type="RNAct" id="Q9Y689">
    <property type="molecule type" value="protein"/>
</dbReference>
<dbReference type="Bgee" id="ENSG00000162980">
    <property type="expression patterns" value="Expressed in calcaneal tendon and 197 other cell types or tissues"/>
</dbReference>
<dbReference type="ExpressionAtlas" id="Q9Y689">
    <property type="expression patterns" value="baseline and differential"/>
</dbReference>
<dbReference type="GO" id="GO:0005737">
    <property type="term" value="C:cytoplasm"/>
    <property type="evidence" value="ECO:0000318"/>
    <property type="project" value="GO_Central"/>
</dbReference>
<dbReference type="GO" id="GO:0005802">
    <property type="term" value="C:trans-Golgi network"/>
    <property type="evidence" value="ECO:0000318"/>
    <property type="project" value="GO_Central"/>
</dbReference>
<dbReference type="GO" id="GO:0005525">
    <property type="term" value="F:GTP binding"/>
    <property type="evidence" value="ECO:0000318"/>
    <property type="project" value="GO_Central"/>
</dbReference>
<dbReference type="GO" id="GO:0003924">
    <property type="term" value="F:GTPase activity"/>
    <property type="evidence" value="ECO:0007669"/>
    <property type="project" value="InterPro"/>
</dbReference>
<dbReference type="GO" id="GO:0006886">
    <property type="term" value="P:intracellular protein transport"/>
    <property type="evidence" value="ECO:0000318"/>
    <property type="project" value="GO_Central"/>
</dbReference>
<dbReference type="GO" id="GO:1903292">
    <property type="term" value="P:protein localization to Golgi membrane"/>
    <property type="evidence" value="ECO:0000316"/>
    <property type="project" value="FlyBase"/>
</dbReference>
<dbReference type="GO" id="GO:0016192">
    <property type="term" value="P:vesicle-mediated transport"/>
    <property type="evidence" value="ECO:0000318"/>
    <property type="project" value="GO_Central"/>
</dbReference>
<dbReference type="CDD" id="cd04153">
    <property type="entry name" value="Arl5_Arl8"/>
    <property type="match status" value="1"/>
</dbReference>
<dbReference type="FunFam" id="3.40.50.300:FF:000294">
    <property type="entry name" value="ADP-ribosylation factor-like protein 5A"/>
    <property type="match status" value="1"/>
</dbReference>
<dbReference type="Gene3D" id="3.40.50.300">
    <property type="entry name" value="P-loop containing nucleotide triphosphate hydrolases"/>
    <property type="match status" value="1"/>
</dbReference>
<dbReference type="InterPro" id="IPR027417">
    <property type="entry name" value="P-loop_NTPase"/>
</dbReference>
<dbReference type="InterPro" id="IPR005225">
    <property type="entry name" value="Small_GTP-bd"/>
</dbReference>
<dbReference type="InterPro" id="IPR024156">
    <property type="entry name" value="Small_GTPase_ARF"/>
</dbReference>
<dbReference type="InterPro" id="IPR006689">
    <property type="entry name" value="Small_GTPase_ARF/SAR"/>
</dbReference>
<dbReference type="NCBIfam" id="TIGR00231">
    <property type="entry name" value="small_GTP"/>
    <property type="match status" value="1"/>
</dbReference>
<dbReference type="PANTHER" id="PTHR11711">
    <property type="entry name" value="ADP RIBOSYLATION FACTOR-RELATED"/>
    <property type="match status" value="1"/>
</dbReference>
<dbReference type="Pfam" id="PF00025">
    <property type="entry name" value="Arf"/>
    <property type="match status" value="1"/>
</dbReference>
<dbReference type="PRINTS" id="PR00328">
    <property type="entry name" value="SAR1GTPBP"/>
</dbReference>
<dbReference type="SMART" id="SM00177">
    <property type="entry name" value="ARF"/>
    <property type="match status" value="1"/>
</dbReference>
<dbReference type="SMART" id="SM00178">
    <property type="entry name" value="SAR"/>
    <property type="match status" value="1"/>
</dbReference>
<dbReference type="SUPFAM" id="SSF52540">
    <property type="entry name" value="P-loop containing nucleoside triphosphate hydrolases"/>
    <property type="match status" value="1"/>
</dbReference>
<dbReference type="PROSITE" id="PS51417">
    <property type="entry name" value="ARF"/>
    <property type="match status" value="1"/>
</dbReference>
<accession>Q9Y689</accession>
<accession>Q580I5</accession>
<feature type="initiator methionine" description="Removed" evidence="2">
    <location>
        <position position="1"/>
    </location>
</feature>
<feature type="chain" id="PRO_0000207467" description="ADP-ribosylation factor-like protein 5A">
    <location>
        <begin position="2"/>
        <end position="179"/>
    </location>
</feature>
<feature type="binding site">
    <location>
        <begin position="23"/>
        <end position="30"/>
    </location>
    <ligand>
        <name>GTP</name>
        <dbReference type="ChEBI" id="CHEBI:37565"/>
    </ligand>
</feature>
<feature type="binding site" evidence="1">
    <location>
        <begin position="66"/>
        <end position="70"/>
    </location>
    <ligand>
        <name>GTP</name>
        <dbReference type="ChEBI" id="CHEBI:37565"/>
    </ligand>
</feature>
<feature type="binding site">
    <location>
        <begin position="125"/>
        <end position="128"/>
    </location>
    <ligand>
        <name>GTP</name>
        <dbReference type="ChEBI" id="CHEBI:37565"/>
    </ligand>
</feature>
<feature type="binding site">
    <location>
        <position position="159"/>
    </location>
    <ligand>
        <name>GTP</name>
        <dbReference type="ChEBI" id="CHEBI:37565"/>
    </ligand>
</feature>
<feature type="lipid moiety-binding region" description="N-myristoyl glycine" evidence="2">
    <location>
        <position position="2"/>
    </location>
</feature>
<feature type="splice variant" id="VSP_041017" description="In isoform 2." evidence="3">
    <location>
        <begin position="1"/>
        <end position="37"/>
    </location>
</feature>
<feature type="helix" evidence="5">
    <location>
        <begin position="3"/>
        <end position="12"/>
    </location>
</feature>
<feature type="strand" evidence="6">
    <location>
        <begin position="17"/>
        <end position="24"/>
    </location>
</feature>
<feature type="helix" evidence="6">
    <location>
        <begin position="29"/>
        <end position="37"/>
    </location>
</feature>
<feature type="strand" evidence="6">
    <location>
        <begin position="42"/>
        <end position="45"/>
    </location>
</feature>
<feature type="strand" evidence="6">
    <location>
        <begin position="48"/>
        <end position="51"/>
    </location>
</feature>
<feature type="strand" evidence="6">
    <location>
        <begin position="53"/>
        <end position="57"/>
    </location>
</feature>
<feature type="strand" evidence="6">
    <location>
        <begin position="60"/>
        <end position="70"/>
    </location>
</feature>
<feature type="helix" evidence="6">
    <location>
        <begin position="71"/>
        <end position="73"/>
    </location>
</feature>
<feature type="helix" evidence="6">
    <location>
        <begin position="76"/>
        <end position="81"/>
    </location>
</feature>
<feature type="strand" evidence="6">
    <location>
        <begin position="86"/>
        <end position="92"/>
    </location>
</feature>
<feature type="turn" evidence="6">
    <location>
        <begin position="96"/>
        <end position="98"/>
    </location>
</feature>
<feature type="helix" evidence="6">
    <location>
        <begin position="99"/>
        <end position="110"/>
    </location>
</feature>
<feature type="helix" evidence="6">
    <location>
        <begin position="113"/>
        <end position="115"/>
    </location>
</feature>
<feature type="strand" evidence="6">
    <location>
        <begin position="119"/>
        <end position="125"/>
    </location>
</feature>
<feature type="helix" evidence="6">
    <location>
        <begin position="135"/>
        <end position="141"/>
    </location>
</feature>
<feature type="helix" evidence="6">
    <location>
        <begin position="144"/>
        <end position="146"/>
    </location>
</feature>
<feature type="strand" evidence="6">
    <location>
        <begin position="152"/>
        <end position="156"/>
    </location>
</feature>
<feature type="turn" evidence="6">
    <location>
        <begin position="159"/>
        <end position="162"/>
    </location>
</feature>
<feature type="helix" evidence="6">
    <location>
        <begin position="165"/>
        <end position="173"/>
    </location>
</feature>
<comment type="function">
    <text evidence="1">Lacks ADP-ribosylation enhancing activity.</text>
</comment>
<comment type="alternative products">
    <event type="alternative splicing"/>
    <isoform>
        <id>Q9Y689-1</id>
        <name>1</name>
        <sequence type="displayed"/>
    </isoform>
    <isoform>
        <id>Q9Y689-2</id>
        <name>2</name>
        <sequence type="described" ref="VSP_041017"/>
    </isoform>
</comment>
<comment type="similarity">
    <text evidence="4">Belongs to the small GTPase superfamily. Arf family.</text>
</comment>
<name>ARL5A_HUMAN</name>
<reference key="1">
    <citation type="journal article" date="2002" name="Gene Expr.">
        <title>Identification and characterization of nine novel human small GTPases showing variable expressions in liver cancer tissues.</title>
        <authorList>
            <person name="He H."/>
            <person name="Dai F.Y."/>
            <person name="Yu L."/>
            <person name="She X."/>
            <person name="Zhao Y."/>
            <person name="Jiang J."/>
            <person name="Chen X."/>
            <person name="Zhao S.Y."/>
        </authorList>
    </citation>
    <scope>NUCLEOTIDE SEQUENCE [MRNA] (ISOFORM 1)</scope>
</reference>
<reference key="2">
    <citation type="journal article" date="2000" name="Proc. Natl. Acad. Sci. U.S.A.">
        <title>Gene expression profiling in the human hypothalamus-pituitary-adrenal axis and full-length cDNA cloning.</title>
        <authorList>
            <person name="Hu R.-M."/>
            <person name="Han Z.-G."/>
            <person name="Song H.-D."/>
            <person name="Peng Y.-D."/>
            <person name="Huang Q.-H."/>
            <person name="Ren S.-X."/>
            <person name="Gu Y.-J."/>
            <person name="Huang C.-H."/>
            <person name="Li Y.-B."/>
            <person name="Jiang C.-L."/>
            <person name="Fu G."/>
            <person name="Zhang Q.-H."/>
            <person name="Gu B.-W."/>
            <person name="Dai M."/>
            <person name="Mao Y.-F."/>
            <person name="Gao G.-F."/>
            <person name="Rong R."/>
            <person name="Ye M."/>
            <person name="Zhou J."/>
            <person name="Xu S.-H."/>
            <person name="Gu J."/>
            <person name="Shi J.-X."/>
            <person name="Jin W.-R."/>
            <person name="Zhang C.-K."/>
            <person name="Wu T.-M."/>
            <person name="Huang G.-Y."/>
            <person name="Chen Z."/>
            <person name="Chen M.-D."/>
            <person name="Chen J.-L."/>
        </authorList>
    </citation>
    <scope>NUCLEOTIDE SEQUENCE [LARGE SCALE MRNA] (ISOFORM 1)</scope>
    <source>
        <tissue>Pituitary</tissue>
    </source>
</reference>
<reference key="3">
    <citation type="journal article" date="2004" name="Nat. Genet.">
        <title>Complete sequencing and characterization of 21,243 full-length human cDNAs.</title>
        <authorList>
            <person name="Ota T."/>
            <person name="Suzuki Y."/>
            <person name="Nishikawa T."/>
            <person name="Otsuki T."/>
            <person name="Sugiyama T."/>
            <person name="Irie R."/>
            <person name="Wakamatsu A."/>
            <person name="Hayashi K."/>
            <person name="Sato H."/>
            <person name="Nagai K."/>
            <person name="Kimura K."/>
            <person name="Makita H."/>
            <person name="Sekine M."/>
            <person name="Obayashi M."/>
            <person name="Nishi T."/>
            <person name="Shibahara T."/>
            <person name="Tanaka T."/>
            <person name="Ishii S."/>
            <person name="Yamamoto J."/>
            <person name="Saito K."/>
            <person name="Kawai Y."/>
            <person name="Isono Y."/>
            <person name="Nakamura Y."/>
            <person name="Nagahari K."/>
            <person name="Murakami K."/>
            <person name="Yasuda T."/>
            <person name="Iwayanagi T."/>
            <person name="Wagatsuma M."/>
            <person name="Shiratori A."/>
            <person name="Sudo H."/>
            <person name="Hosoiri T."/>
            <person name="Kaku Y."/>
            <person name="Kodaira H."/>
            <person name="Kondo H."/>
            <person name="Sugawara M."/>
            <person name="Takahashi M."/>
            <person name="Kanda K."/>
            <person name="Yokoi T."/>
            <person name="Furuya T."/>
            <person name="Kikkawa E."/>
            <person name="Omura Y."/>
            <person name="Abe K."/>
            <person name="Kamihara K."/>
            <person name="Katsuta N."/>
            <person name="Sato K."/>
            <person name="Tanikawa M."/>
            <person name="Yamazaki M."/>
            <person name="Ninomiya K."/>
            <person name="Ishibashi T."/>
            <person name="Yamashita H."/>
            <person name="Murakawa K."/>
            <person name="Fujimori K."/>
            <person name="Tanai H."/>
            <person name="Kimata M."/>
            <person name="Watanabe M."/>
            <person name="Hiraoka S."/>
            <person name="Chiba Y."/>
            <person name="Ishida S."/>
            <person name="Ono Y."/>
            <person name="Takiguchi S."/>
            <person name="Watanabe S."/>
            <person name="Yosida M."/>
            <person name="Hotuta T."/>
            <person name="Kusano J."/>
            <person name="Kanehori K."/>
            <person name="Takahashi-Fujii A."/>
            <person name="Hara H."/>
            <person name="Tanase T.-O."/>
            <person name="Nomura Y."/>
            <person name="Togiya S."/>
            <person name="Komai F."/>
            <person name="Hara R."/>
            <person name="Takeuchi K."/>
            <person name="Arita M."/>
            <person name="Imose N."/>
            <person name="Musashino K."/>
            <person name="Yuuki H."/>
            <person name="Oshima A."/>
            <person name="Sasaki N."/>
            <person name="Aotsuka S."/>
            <person name="Yoshikawa Y."/>
            <person name="Matsunawa H."/>
            <person name="Ichihara T."/>
            <person name="Shiohata N."/>
            <person name="Sano S."/>
            <person name="Moriya S."/>
            <person name="Momiyama H."/>
            <person name="Satoh N."/>
            <person name="Takami S."/>
            <person name="Terashima Y."/>
            <person name="Suzuki O."/>
            <person name="Nakagawa S."/>
            <person name="Senoh A."/>
            <person name="Mizoguchi H."/>
            <person name="Goto Y."/>
            <person name="Shimizu F."/>
            <person name="Wakebe H."/>
            <person name="Hishigaki H."/>
            <person name="Watanabe T."/>
            <person name="Sugiyama A."/>
            <person name="Takemoto M."/>
            <person name="Kawakami B."/>
            <person name="Yamazaki M."/>
            <person name="Watanabe K."/>
            <person name="Kumagai A."/>
            <person name="Itakura S."/>
            <person name="Fukuzumi Y."/>
            <person name="Fujimori Y."/>
            <person name="Komiyama M."/>
            <person name="Tashiro H."/>
            <person name="Tanigami A."/>
            <person name="Fujiwara T."/>
            <person name="Ono T."/>
            <person name="Yamada K."/>
            <person name="Fujii Y."/>
            <person name="Ozaki K."/>
            <person name="Hirao M."/>
            <person name="Ohmori Y."/>
            <person name="Kawabata A."/>
            <person name="Hikiji T."/>
            <person name="Kobatake N."/>
            <person name="Inagaki H."/>
            <person name="Ikema Y."/>
            <person name="Okamoto S."/>
            <person name="Okitani R."/>
            <person name="Kawakami T."/>
            <person name="Noguchi S."/>
            <person name="Itoh T."/>
            <person name="Shigeta K."/>
            <person name="Senba T."/>
            <person name="Matsumura K."/>
            <person name="Nakajima Y."/>
            <person name="Mizuno T."/>
            <person name="Morinaga M."/>
            <person name="Sasaki M."/>
            <person name="Togashi T."/>
            <person name="Oyama M."/>
            <person name="Hata H."/>
            <person name="Watanabe M."/>
            <person name="Komatsu T."/>
            <person name="Mizushima-Sugano J."/>
            <person name="Satoh T."/>
            <person name="Shirai Y."/>
            <person name="Takahashi Y."/>
            <person name="Nakagawa K."/>
            <person name="Okumura K."/>
            <person name="Nagase T."/>
            <person name="Nomura N."/>
            <person name="Kikuchi H."/>
            <person name="Masuho Y."/>
            <person name="Yamashita R."/>
            <person name="Nakai K."/>
            <person name="Yada T."/>
            <person name="Nakamura Y."/>
            <person name="Ohara O."/>
            <person name="Isogai T."/>
            <person name="Sugano S."/>
        </authorList>
    </citation>
    <scope>NUCLEOTIDE SEQUENCE [LARGE SCALE MRNA] (ISOFORM 1)</scope>
    <source>
        <tissue>Thymus</tissue>
    </source>
</reference>
<reference key="4">
    <citation type="submission" date="2002-03" db="EMBL/GenBank/DDBJ databases">
        <title>cDNA clones of human proteins involved in signal transduction sequenced by the Guthrie cDNA resource center (www.cdna.org).</title>
        <authorList>
            <person name="Puhl H.L. III"/>
            <person name="Ikeda S.R."/>
            <person name="Aronstam R.S."/>
        </authorList>
    </citation>
    <scope>NUCLEOTIDE SEQUENCE [LARGE SCALE MRNA] (ISOFORM 1)</scope>
    <source>
        <tissue>Brain</tissue>
    </source>
</reference>
<reference key="5">
    <citation type="submission" date="2003-08" db="EMBL/GenBank/DDBJ databases">
        <title>Cloning of human full-length CDSs in BD Creator(TM) system donor vector.</title>
        <authorList>
            <person name="Kalnine N."/>
            <person name="Chen X."/>
            <person name="Rolfs A."/>
            <person name="Halleck A."/>
            <person name="Hines L."/>
            <person name="Eisenstein S."/>
            <person name="Koundinya M."/>
            <person name="Raphael J."/>
            <person name="Moreira D."/>
            <person name="Kelley T."/>
            <person name="LaBaer J."/>
            <person name="Lin Y."/>
            <person name="Phelan M."/>
            <person name="Farmer A."/>
        </authorList>
    </citation>
    <scope>NUCLEOTIDE SEQUENCE [LARGE SCALE MRNA] (ISOFORM 1)</scope>
</reference>
<reference key="6">
    <citation type="submission" date="2004-07" db="EMBL/GenBank/DDBJ databases">
        <title>Full-length cDNA libraries and normalization.</title>
        <authorList>
            <person name="Li W.B."/>
            <person name="Gruber C."/>
            <person name="Jessee J."/>
            <person name="Polayes D."/>
        </authorList>
    </citation>
    <scope>NUCLEOTIDE SEQUENCE [LARGE SCALE MRNA] (ISOFORM 2)</scope>
</reference>
<reference key="7">
    <citation type="journal article" date="2005" name="Nature">
        <title>Generation and annotation of the DNA sequences of human chromosomes 2 and 4.</title>
        <authorList>
            <person name="Hillier L.W."/>
            <person name="Graves T.A."/>
            <person name="Fulton R.S."/>
            <person name="Fulton L.A."/>
            <person name="Pepin K.H."/>
            <person name="Minx P."/>
            <person name="Wagner-McPherson C."/>
            <person name="Layman D."/>
            <person name="Wylie K."/>
            <person name="Sekhon M."/>
            <person name="Becker M.C."/>
            <person name="Fewell G.A."/>
            <person name="Delehaunty K.D."/>
            <person name="Miner T.L."/>
            <person name="Nash W.E."/>
            <person name="Kremitzki C."/>
            <person name="Oddy L."/>
            <person name="Du H."/>
            <person name="Sun H."/>
            <person name="Bradshaw-Cordum H."/>
            <person name="Ali J."/>
            <person name="Carter J."/>
            <person name="Cordes M."/>
            <person name="Harris A."/>
            <person name="Isak A."/>
            <person name="van Brunt A."/>
            <person name="Nguyen C."/>
            <person name="Du F."/>
            <person name="Courtney L."/>
            <person name="Kalicki J."/>
            <person name="Ozersky P."/>
            <person name="Abbott S."/>
            <person name="Armstrong J."/>
            <person name="Belter E.A."/>
            <person name="Caruso L."/>
            <person name="Cedroni M."/>
            <person name="Cotton M."/>
            <person name="Davidson T."/>
            <person name="Desai A."/>
            <person name="Elliott G."/>
            <person name="Erb T."/>
            <person name="Fronick C."/>
            <person name="Gaige T."/>
            <person name="Haakenson W."/>
            <person name="Haglund K."/>
            <person name="Holmes A."/>
            <person name="Harkins R."/>
            <person name="Kim K."/>
            <person name="Kruchowski S.S."/>
            <person name="Strong C.M."/>
            <person name="Grewal N."/>
            <person name="Goyea E."/>
            <person name="Hou S."/>
            <person name="Levy A."/>
            <person name="Martinka S."/>
            <person name="Mead K."/>
            <person name="McLellan M.D."/>
            <person name="Meyer R."/>
            <person name="Randall-Maher J."/>
            <person name="Tomlinson C."/>
            <person name="Dauphin-Kohlberg S."/>
            <person name="Kozlowicz-Reilly A."/>
            <person name="Shah N."/>
            <person name="Swearengen-Shahid S."/>
            <person name="Snider J."/>
            <person name="Strong J.T."/>
            <person name="Thompson J."/>
            <person name="Yoakum M."/>
            <person name="Leonard S."/>
            <person name="Pearman C."/>
            <person name="Trani L."/>
            <person name="Radionenko M."/>
            <person name="Waligorski J.E."/>
            <person name="Wang C."/>
            <person name="Rock S.M."/>
            <person name="Tin-Wollam A.-M."/>
            <person name="Maupin R."/>
            <person name="Latreille P."/>
            <person name="Wendl M.C."/>
            <person name="Yang S.-P."/>
            <person name="Pohl C."/>
            <person name="Wallis J.W."/>
            <person name="Spieth J."/>
            <person name="Bieri T.A."/>
            <person name="Berkowicz N."/>
            <person name="Nelson J.O."/>
            <person name="Osborne J."/>
            <person name="Ding L."/>
            <person name="Meyer R."/>
            <person name="Sabo A."/>
            <person name="Shotland Y."/>
            <person name="Sinha P."/>
            <person name="Wohldmann P.E."/>
            <person name="Cook L.L."/>
            <person name="Hickenbotham M.T."/>
            <person name="Eldred J."/>
            <person name="Williams D."/>
            <person name="Jones T.A."/>
            <person name="She X."/>
            <person name="Ciccarelli F.D."/>
            <person name="Izaurralde E."/>
            <person name="Taylor J."/>
            <person name="Schmutz J."/>
            <person name="Myers R.M."/>
            <person name="Cox D.R."/>
            <person name="Huang X."/>
            <person name="McPherson J.D."/>
            <person name="Mardis E.R."/>
            <person name="Clifton S.W."/>
            <person name="Warren W.C."/>
            <person name="Chinwalla A.T."/>
            <person name="Eddy S.R."/>
            <person name="Marra M.A."/>
            <person name="Ovcharenko I."/>
            <person name="Furey T.S."/>
            <person name="Miller W."/>
            <person name="Eichler E.E."/>
            <person name="Bork P."/>
            <person name="Suyama M."/>
            <person name="Torrents D."/>
            <person name="Waterston R.H."/>
            <person name="Wilson R.K."/>
        </authorList>
    </citation>
    <scope>NUCLEOTIDE SEQUENCE [LARGE SCALE GENOMIC DNA]</scope>
</reference>
<reference key="8">
    <citation type="submission" date="2005-09" db="EMBL/GenBank/DDBJ databases">
        <authorList>
            <person name="Mural R.J."/>
            <person name="Istrail S."/>
            <person name="Sutton G.G."/>
            <person name="Florea L."/>
            <person name="Halpern A.L."/>
            <person name="Mobarry C.M."/>
            <person name="Lippert R."/>
            <person name="Walenz B."/>
            <person name="Shatkay H."/>
            <person name="Dew I."/>
            <person name="Miller J.R."/>
            <person name="Flanigan M.J."/>
            <person name="Edwards N.J."/>
            <person name="Bolanos R."/>
            <person name="Fasulo D."/>
            <person name="Halldorsson B.V."/>
            <person name="Hannenhalli S."/>
            <person name="Turner R."/>
            <person name="Yooseph S."/>
            <person name="Lu F."/>
            <person name="Nusskern D.R."/>
            <person name="Shue B.C."/>
            <person name="Zheng X.H."/>
            <person name="Zhong F."/>
            <person name="Delcher A.L."/>
            <person name="Huson D.H."/>
            <person name="Kravitz S.A."/>
            <person name="Mouchard L."/>
            <person name="Reinert K."/>
            <person name="Remington K.A."/>
            <person name="Clark A.G."/>
            <person name="Waterman M.S."/>
            <person name="Eichler E.E."/>
            <person name="Adams M.D."/>
            <person name="Hunkapiller M.W."/>
            <person name="Myers E.W."/>
            <person name="Venter J.C."/>
        </authorList>
    </citation>
    <scope>NUCLEOTIDE SEQUENCE [LARGE SCALE GENOMIC DNA]</scope>
</reference>
<reference key="9">
    <citation type="journal article" date="2004" name="Genome Res.">
        <title>The status, quality, and expansion of the NIH full-length cDNA project: the Mammalian Gene Collection (MGC).</title>
        <authorList>
            <consortium name="The MGC Project Team"/>
        </authorList>
    </citation>
    <scope>NUCLEOTIDE SEQUENCE [LARGE SCALE MRNA] (ISOFORM 1)</scope>
    <source>
        <tissue>Placenta</tissue>
    </source>
</reference>
<reference key="10">
    <citation type="journal article" date="2005" name="Biochem. Biophys. Res. Commun.">
        <title>2.0 A crystal structure of human ARL5-GDP3'P, a novel member of the small GTP-binding proteins.</title>
        <authorList>
            <person name="Wang Z.-X."/>
            <person name="Shi L."/>
            <person name="Liu J.-F."/>
            <person name="An X.-M."/>
            <person name="Chang W.-R."/>
            <person name="Liang D.-C."/>
        </authorList>
    </citation>
    <scope>X-RAY CRYSTALLOGRAPHY (2.0 ANGSTROMS) IN COMPLEX WITH GTP ANALOG</scope>
</reference>
<reference key="11">
    <citation type="submission" date="2006-06" db="PDB data bank">
        <title>Structure of human ADP-ribosylation factor-like 5 (ARL5).</title>
        <authorList>
            <consortium name="Structural genomics consortium (SGC)"/>
        </authorList>
    </citation>
    <scope>X-RAY CRYSTALLOGRAPHY (1.7 ANGSTROMS) OF 15-176</scope>
</reference>
<gene>
    <name type="primary">ARL5A</name>
    <name type="synonym">ARFLP5</name>
    <name type="synonym">ARL5</name>
</gene>